<dbReference type="EMBL" id="CP000308">
    <property type="protein sequence ID" value="ABG14253.1"/>
    <property type="molecule type" value="Genomic_DNA"/>
</dbReference>
<dbReference type="RefSeq" id="WP_002209794.1">
    <property type="nucleotide sequence ID" value="NZ_CP009906.1"/>
</dbReference>
<dbReference type="SMR" id="Q1C5L9"/>
<dbReference type="GeneID" id="57975807"/>
<dbReference type="KEGG" id="ypa:YPA_2288"/>
<dbReference type="Proteomes" id="UP000001971">
    <property type="component" value="Chromosome"/>
</dbReference>
<dbReference type="GO" id="GO:0005886">
    <property type="term" value="C:plasma membrane"/>
    <property type="evidence" value="ECO:0007669"/>
    <property type="project" value="UniProtKB-SubCell"/>
</dbReference>
<dbReference type="GO" id="GO:0042910">
    <property type="term" value="F:xenobiotic transmembrane transporter activity"/>
    <property type="evidence" value="ECO:0007669"/>
    <property type="project" value="TreeGrafter"/>
</dbReference>
<dbReference type="FunFam" id="1.20.1640.10:FF:000001">
    <property type="entry name" value="Efflux pump membrane transporter"/>
    <property type="match status" value="1"/>
</dbReference>
<dbReference type="FunFam" id="3.30.70.1430:FF:000001">
    <property type="entry name" value="Efflux pump membrane transporter"/>
    <property type="match status" value="1"/>
</dbReference>
<dbReference type="FunFam" id="3.30.2090.10:FF:000004">
    <property type="entry name" value="Multidrug resistance protein MdtC"/>
    <property type="match status" value="1"/>
</dbReference>
<dbReference type="Gene3D" id="3.30.70.1430">
    <property type="entry name" value="Multidrug efflux transporter AcrB pore domain"/>
    <property type="match status" value="2"/>
</dbReference>
<dbReference type="Gene3D" id="3.30.70.1440">
    <property type="entry name" value="Multidrug efflux transporter AcrB pore domain"/>
    <property type="match status" value="1"/>
</dbReference>
<dbReference type="Gene3D" id="3.30.70.1320">
    <property type="entry name" value="Multidrug efflux transporter AcrB pore domain like"/>
    <property type="match status" value="1"/>
</dbReference>
<dbReference type="Gene3D" id="3.30.2090.10">
    <property type="entry name" value="Multidrug efflux transporter AcrB TolC docking domain, DN and DC subdomains"/>
    <property type="match status" value="2"/>
</dbReference>
<dbReference type="Gene3D" id="1.20.1640.10">
    <property type="entry name" value="Multidrug efflux transporter AcrB transmembrane domain"/>
    <property type="match status" value="2"/>
</dbReference>
<dbReference type="HAMAP" id="MF_01424">
    <property type="entry name" value="MdtC"/>
    <property type="match status" value="1"/>
</dbReference>
<dbReference type="InterPro" id="IPR027463">
    <property type="entry name" value="AcrB_DN_DC_subdom"/>
</dbReference>
<dbReference type="InterPro" id="IPR001036">
    <property type="entry name" value="Acrflvin-R"/>
</dbReference>
<dbReference type="InterPro" id="IPR023931">
    <property type="entry name" value="Multidrug-R_MdtC"/>
</dbReference>
<dbReference type="NCBIfam" id="NF007905">
    <property type="entry name" value="PRK10614.1"/>
    <property type="match status" value="1"/>
</dbReference>
<dbReference type="NCBIfam" id="NF033617">
    <property type="entry name" value="RND_permease_2"/>
    <property type="match status" value="1"/>
</dbReference>
<dbReference type="PANTHER" id="PTHR32063">
    <property type="match status" value="1"/>
</dbReference>
<dbReference type="PANTHER" id="PTHR32063:SF34">
    <property type="entry name" value="MULTIDRUG RESISTANCE PROTEIN MDTC"/>
    <property type="match status" value="1"/>
</dbReference>
<dbReference type="Pfam" id="PF00873">
    <property type="entry name" value="ACR_tran"/>
    <property type="match status" value="1"/>
</dbReference>
<dbReference type="PRINTS" id="PR00702">
    <property type="entry name" value="ACRIFLAVINRP"/>
</dbReference>
<dbReference type="SUPFAM" id="SSF82693">
    <property type="entry name" value="Multidrug efflux transporter AcrB pore domain, PN1, PN2, PC1 and PC2 subdomains"/>
    <property type="match status" value="4"/>
</dbReference>
<dbReference type="SUPFAM" id="SSF82714">
    <property type="entry name" value="Multidrug efflux transporter AcrB TolC docking domain, DN and DC subdomains"/>
    <property type="match status" value="2"/>
</dbReference>
<dbReference type="SUPFAM" id="SSF82866">
    <property type="entry name" value="Multidrug efflux transporter AcrB transmembrane domain"/>
    <property type="match status" value="2"/>
</dbReference>
<organism>
    <name type="scientific">Yersinia pestis bv. Antiqua (strain Antiqua)</name>
    <dbReference type="NCBI Taxonomy" id="360102"/>
    <lineage>
        <taxon>Bacteria</taxon>
        <taxon>Pseudomonadati</taxon>
        <taxon>Pseudomonadota</taxon>
        <taxon>Gammaproteobacteria</taxon>
        <taxon>Enterobacterales</taxon>
        <taxon>Yersiniaceae</taxon>
        <taxon>Yersinia</taxon>
    </lineage>
</organism>
<proteinExistence type="inferred from homology"/>
<accession>Q1C5L9</accession>
<comment type="subunit">
    <text evidence="1">Part of a tripartite efflux system composed of MdtA, MdtB and MdtC. MdtC forms a heteromultimer with MdtB.</text>
</comment>
<comment type="subcellular location">
    <subcellularLocation>
        <location evidence="1">Cell inner membrane</location>
        <topology evidence="1">Multi-pass membrane protein</topology>
    </subcellularLocation>
</comment>
<comment type="similarity">
    <text evidence="1">Belongs to the resistance-nodulation-cell division (RND) (TC 2.A.6) family. MdtC subfamily.</text>
</comment>
<feature type="chain" id="PRO_1000024321" description="Multidrug resistance protein MdtC">
    <location>
        <begin position="1"/>
        <end position="1024"/>
    </location>
</feature>
<feature type="transmembrane region" description="Helical" evidence="1">
    <location>
        <begin position="12"/>
        <end position="32"/>
    </location>
</feature>
<feature type="transmembrane region" description="Helical" evidence="1">
    <location>
        <begin position="333"/>
        <end position="353"/>
    </location>
</feature>
<feature type="transmembrane region" description="Helical" evidence="1">
    <location>
        <begin position="360"/>
        <end position="380"/>
    </location>
</feature>
<feature type="transmembrane region" description="Helical" evidence="1">
    <location>
        <begin position="387"/>
        <end position="407"/>
    </location>
</feature>
<feature type="transmembrane region" description="Helical" evidence="1">
    <location>
        <begin position="435"/>
        <end position="455"/>
    </location>
</feature>
<feature type="transmembrane region" description="Helical" evidence="1">
    <location>
        <begin position="469"/>
        <end position="489"/>
    </location>
</feature>
<feature type="transmembrane region" description="Helical" evidence="1">
    <location>
        <begin position="528"/>
        <end position="548"/>
    </location>
</feature>
<feature type="transmembrane region" description="Helical" evidence="1">
    <location>
        <begin position="853"/>
        <end position="873"/>
    </location>
</feature>
<feature type="transmembrane region" description="Helical" evidence="1">
    <location>
        <begin position="875"/>
        <end position="895"/>
    </location>
</feature>
<feature type="transmembrane region" description="Helical" evidence="1">
    <location>
        <begin position="897"/>
        <end position="917"/>
    </location>
</feature>
<feature type="transmembrane region" description="Helical" evidence="1">
    <location>
        <begin position="953"/>
        <end position="973"/>
    </location>
</feature>
<feature type="transmembrane region" description="Helical" evidence="1">
    <location>
        <begin position="984"/>
        <end position="1004"/>
    </location>
</feature>
<evidence type="ECO:0000255" key="1">
    <source>
        <dbReference type="HAMAP-Rule" id="MF_01424"/>
    </source>
</evidence>
<name>MDTC_YERPA</name>
<sequence length="1024" mass="110386">MKFFALFIQRPVATTLLTLAITLSGIIGFSLLPVSPLPQVDYPVIMVSASMPGADPETMASSVATPLERALGRIAGVNEMTSTSSLGSTRIILQFDLNRDINGAARDVQAALNAAQSLLPSGMPSRPTYRKMNPSDAPIMIMTLTSDTFSQGQLYDYASTKLAQKIAQTEGVSDVTVGGSSLPAVRVELNPSALFNQGVSLDAVRQAISAANVRRPQGSVDAAETHWQVQANDEIKTAEGYRPLIVHYNNGSPVRLQDVANVIDSVQDVRNAGMSAGQPAVLLVISREPGANIIATVDRIRAELPALRASIPASIQLNIAQDRSPTIRASLDEVERSLVIAVALVILVVFIFLRSGRATLIPAVAVPVSLIGTFAAMYLCGFSLNNLSLMALTIATGFVVDDAIVVLENISRHLEAGVKPKVAALRGVREVGFTVLSMSISLVAVFIPLLLMAGLPGRLFREFAVTLSVAIGISLVISLTLTPMMCAWLLRSHPKGQQQRIRGFGKVLLAIQQGYGRSLNWALSHTRWVMVVLLSTIALNVWLYISIPKTFFPEQDTGRMMGFIQADQSISFQSMQQKLKDFMQIVGADPAVDSVTGFTGGSRTNSGSMFISLKPLSERQETAQQVITRLRGKLAKEPGANLFLSSVQDIRVGGRHSNAAYQFTLLADDLAALREWEPKVRAALAKLPQLADVNSDQQDKGAEMALTYDRETMARLGIDVSEANALLNNAFGQRQISTIYQPLNQYKVVMEVAPEYTQDVSSLDKMFVINSNGQSIPLSYFAKWQPANAPLAVNHQGLSAASTISFNLPDGGSLSEATAAVERAMTELGVPSTVRGAFAGTAQVFQETLKSQLWLIMAAIATVYIVLGILYESYVHPLTILSTLPSAGVGALLALELFDAPFSLIALIGIMLLIGIVKKNAIMMVDFALDAQRNGNISAREAIFQASLLRFRPIIMTTLAALFGALPLVLSSGDGAELRQPLGITIVGGLVVSQLLTLYTTPVIYLYFDRLRNRFSKQPLMKLE</sequence>
<keyword id="KW-0997">Cell inner membrane</keyword>
<keyword id="KW-1003">Cell membrane</keyword>
<keyword id="KW-0472">Membrane</keyword>
<keyword id="KW-0812">Transmembrane</keyword>
<keyword id="KW-1133">Transmembrane helix</keyword>
<keyword id="KW-0813">Transport</keyword>
<reference key="1">
    <citation type="journal article" date="2006" name="J. Bacteriol.">
        <title>Complete genome sequence of Yersinia pestis strains Antiqua and Nepal516: evidence of gene reduction in an emerging pathogen.</title>
        <authorList>
            <person name="Chain P.S.G."/>
            <person name="Hu P."/>
            <person name="Malfatti S.A."/>
            <person name="Radnedge L."/>
            <person name="Larimer F."/>
            <person name="Vergez L.M."/>
            <person name="Worsham P."/>
            <person name="Chu M.C."/>
            <person name="Andersen G.L."/>
        </authorList>
    </citation>
    <scope>NUCLEOTIDE SEQUENCE [LARGE SCALE GENOMIC DNA]</scope>
    <source>
        <strain>Antiqua</strain>
    </source>
</reference>
<gene>
    <name evidence="1" type="primary">mdtC</name>
    <name type="ordered locus">YPA_2288</name>
</gene>
<protein>
    <recommendedName>
        <fullName evidence="1">Multidrug resistance protein MdtC</fullName>
    </recommendedName>
    <alternativeName>
        <fullName evidence="1">Multidrug transporter MdtC</fullName>
    </alternativeName>
</protein>